<keyword id="KW-1185">Reference proteome</keyword>
<keyword id="KW-0687">Ribonucleoprotein</keyword>
<keyword id="KW-0689">Ribosomal protein</keyword>
<keyword id="KW-0694">RNA-binding</keyword>
<keyword id="KW-0699">rRNA-binding</keyword>
<feature type="chain" id="PRO_0000260876" description="Large ribosomal subunit protein uL6">
    <location>
        <begin position="1"/>
        <end position="177"/>
    </location>
</feature>
<protein>
    <recommendedName>
        <fullName evidence="1">Large ribosomal subunit protein uL6</fullName>
    </recommendedName>
    <alternativeName>
        <fullName evidence="2">50S ribosomal protein L6</fullName>
    </alternativeName>
</protein>
<evidence type="ECO:0000255" key="1">
    <source>
        <dbReference type="HAMAP-Rule" id="MF_01365"/>
    </source>
</evidence>
<evidence type="ECO:0000305" key="2"/>
<proteinExistence type="inferred from homology"/>
<reference key="1">
    <citation type="journal article" date="2004" name="Proc. Natl. Acad. Sci. U.S.A.">
        <title>Genome sequence of the deep-sea gamma-proteobacterium Idiomarina loihiensis reveals amino acid fermentation as a source of carbon and energy.</title>
        <authorList>
            <person name="Hou S."/>
            <person name="Saw J.H."/>
            <person name="Lee K.S."/>
            <person name="Freitas T.A."/>
            <person name="Belisle C."/>
            <person name="Kawarabayasi Y."/>
            <person name="Donachie S.P."/>
            <person name="Pikina A."/>
            <person name="Galperin M.Y."/>
            <person name="Koonin E.V."/>
            <person name="Makarova K.S."/>
            <person name="Omelchenko M.V."/>
            <person name="Sorokin A."/>
            <person name="Wolf Y.I."/>
            <person name="Li Q.X."/>
            <person name="Keum Y.S."/>
            <person name="Campbell S."/>
            <person name="Denery J."/>
            <person name="Aizawa S."/>
            <person name="Shibata S."/>
            <person name="Malahoff A."/>
            <person name="Alam M."/>
        </authorList>
    </citation>
    <scope>NUCLEOTIDE SEQUENCE [LARGE SCALE GENOMIC DNA]</scope>
    <source>
        <strain>ATCC BAA-735 / DSM 15497 / L2-TR</strain>
    </source>
</reference>
<organism>
    <name type="scientific">Idiomarina loihiensis (strain ATCC BAA-735 / DSM 15497 / L2-TR)</name>
    <dbReference type="NCBI Taxonomy" id="283942"/>
    <lineage>
        <taxon>Bacteria</taxon>
        <taxon>Pseudomonadati</taxon>
        <taxon>Pseudomonadota</taxon>
        <taxon>Gammaproteobacteria</taxon>
        <taxon>Alteromonadales</taxon>
        <taxon>Idiomarinaceae</taxon>
        <taxon>Idiomarina</taxon>
    </lineage>
</organism>
<gene>
    <name evidence="1" type="primary">rplF</name>
    <name type="ordered locus">IL1901</name>
</gene>
<name>RL6_IDILO</name>
<dbReference type="EMBL" id="AE017340">
    <property type="protein sequence ID" value="AAV82733.1"/>
    <property type="molecule type" value="Genomic_DNA"/>
</dbReference>
<dbReference type="RefSeq" id="WP_011235132.1">
    <property type="nucleotide sequence ID" value="NC_006512.1"/>
</dbReference>
<dbReference type="SMR" id="Q5QXW0"/>
<dbReference type="STRING" id="283942.IL1901"/>
<dbReference type="GeneID" id="41337089"/>
<dbReference type="KEGG" id="ilo:IL1901"/>
<dbReference type="eggNOG" id="COG0097">
    <property type="taxonomic scope" value="Bacteria"/>
</dbReference>
<dbReference type="HOGENOM" id="CLU_065464_1_2_6"/>
<dbReference type="OrthoDB" id="9805007at2"/>
<dbReference type="Proteomes" id="UP000001171">
    <property type="component" value="Chromosome"/>
</dbReference>
<dbReference type="GO" id="GO:0022625">
    <property type="term" value="C:cytosolic large ribosomal subunit"/>
    <property type="evidence" value="ECO:0007669"/>
    <property type="project" value="TreeGrafter"/>
</dbReference>
<dbReference type="GO" id="GO:0019843">
    <property type="term" value="F:rRNA binding"/>
    <property type="evidence" value="ECO:0007669"/>
    <property type="project" value="UniProtKB-UniRule"/>
</dbReference>
<dbReference type="GO" id="GO:0003735">
    <property type="term" value="F:structural constituent of ribosome"/>
    <property type="evidence" value="ECO:0007669"/>
    <property type="project" value="InterPro"/>
</dbReference>
<dbReference type="GO" id="GO:0002181">
    <property type="term" value="P:cytoplasmic translation"/>
    <property type="evidence" value="ECO:0007669"/>
    <property type="project" value="TreeGrafter"/>
</dbReference>
<dbReference type="FunFam" id="3.90.930.12:FF:000001">
    <property type="entry name" value="50S ribosomal protein L6"/>
    <property type="match status" value="1"/>
</dbReference>
<dbReference type="FunFam" id="3.90.930.12:FF:000002">
    <property type="entry name" value="50S ribosomal protein L6"/>
    <property type="match status" value="1"/>
</dbReference>
<dbReference type="Gene3D" id="3.90.930.12">
    <property type="entry name" value="Ribosomal protein L6, alpha-beta domain"/>
    <property type="match status" value="2"/>
</dbReference>
<dbReference type="HAMAP" id="MF_01365_B">
    <property type="entry name" value="Ribosomal_uL6_B"/>
    <property type="match status" value="1"/>
</dbReference>
<dbReference type="InterPro" id="IPR000702">
    <property type="entry name" value="Ribosomal_uL6-like"/>
</dbReference>
<dbReference type="InterPro" id="IPR036789">
    <property type="entry name" value="Ribosomal_uL6-like_a/b-dom_sf"/>
</dbReference>
<dbReference type="InterPro" id="IPR020040">
    <property type="entry name" value="Ribosomal_uL6_a/b-dom"/>
</dbReference>
<dbReference type="InterPro" id="IPR019906">
    <property type="entry name" value="Ribosomal_uL6_bac-type"/>
</dbReference>
<dbReference type="InterPro" id="IPR002358">
    <property type="entry name" value="Ribosomal_uL6_CS"/>
</dbReference>
<dbReference type="NCBIfam" id="TIGR03654">
    <property type="entry name" value="L6_bact"/>
    <property type="match status" value="1"/>
</dbReference>
<dbReference type="PANTHER" id="PTHR11655">
    <property type="entry name" value="60S/50S RIBOSOMAL PROTEIN L6/L9"/>
    <property type="match status" value="1"/>
</dbReference>
<dbReference type="PANTHER" id="PTHR11655:SF14">
    <property type="entry name" value="LARGE RIBOSOMAL SUBUNIT PROTEIN UL6M"/>
    <property type="match status" value="1"/>
</dbReference>
<dbReference type="Pfam" id="PF00347">
    <property type="entry name" value="Ribosomal_L6"/>
    <property type="match status" value="2"/>
</dbReference>
<dbReference type="PIRSF" id="PIRSF002162">
    <property type="entry name" value="Ribosomal_L6"/>
    <property type="match status" value="1"/>
</dbReference>
<dbReference type="PRINTS" id="PR00059">
    <property type="entry name" value="RIBOSOMALL6"/>
</dbReference>
<dbReference type="SUPFAM" id="SSF56053">
    <property type="entry name" value="Ribosomal protein L6"/>
    <property type="match status" value="2"/>
</dbReference>
<dbReference type="PROSITE" id="PS00525">
    <property type="entry name" value="RIBOSOMAL_L6_1"/>
    <property type="match status" value="1"/>
</dbReference>
<comment type="function">
    <text evidence="1">This protein binds to the 23S rRNA, and is important in its secondary structure. It is located near the subunit interface in the base of the L7/L12 stalk, and near the tRNA binding site of the peptidyltransferase center.</text>
</comment>
<comment type="subunit">
    <text evidence="1">Part of the 50S ribosomal subunit.</text>
</comment>
<comment type="similarity">
    <text evidence="1">Belongs to the universal ribosomal protein uL6 family.</text>
</comment>
<sequence>MSRVAKAPIEIPAGVEVTLNGQEVTIKGAQGSLSRVVNDAVELVKDESELRTNAREGVANSTAQAGTARALLQNMVVGVTKGFERKLQLIGVGYRAQAQGKKLNLTLGFSHPVEFEIPEGITIDTPTQTEVVVKGADKQLVGQVAANIRAYRKPEPYKGKGVRYADEQVRRKEAKKK</sequence>
<accession>Q5QXW0</accession>